<protein>
    <recommendedName>
        <fullName evidence="1">ATP synthase gamma chain</fullName>
    </recommendedName>
    <alternativeName>
        <fullName evidence="1">ATP synthase F1 sector gamma subunit</fullName>
    </alternativeName>
    <alternativeName>
        <fullName evidence="1">F-ATPase gamma subunit</fullName>
    </alternativeName>
</protein>
<gene>
    <name evidence="1" type="primary">atpG</name>
    <name type="ordered locus">Suden_1404</name>
</gene>
<feature type="chain" id="PRO_1000053371" description="ATP synthase gamma chain">
    <location>
        <begin position="1"/>
        <end position="295"/>
    </location>
</feature>
<accession>Q30QQ0</accession>
<evidence type="ECO:0000255" key="1">
    <source>
        <dbReference type="HAMAP-Rule" id="MF_00815"/>
    </source>
</evidence>
<organism>
    <name type="scientific">Sulfurimonas denitrificans (strain ATCC 33889 / DSM 1251)</name>
    <name type="common">Thiomicrospira denitrificans (strain ATCC 33889 / DSM 1251)</name>
    <dbReference type="NCBI Taxonomy" id="326298"/>
    <lineage>
        <taxon>Bacteria</taxon>
        <taxon>Pseudomonadati</taxon>
        <taxon>Campylobacterota</taxon>
        <taxon>Epsilonproteobacteria</taxon>
        <taxon>Campylobacterales</taxon>
        <taxon>Sulfurimonadaceae</taxon>
        <taxon>Sulfurimonas</taxon>
    </lineage>
</organism>
<proteinExistence type="inferred from homology"/>
<sequence>MANLKDIQRQIKSVSNTQKTTRAMKLVSTAKLRRAEELAKRSRLYAAKMNQVIAEIAGRIRCNKVGGIDNRCFSKIEDPKTVDIIFVTADKGLCGGFNIQTIKAVKKLLSEYKAKNVKVRLRGIGKKGVEFFKYNEVELFDSVSNLSSKPDKEKSDEFILSSIEDFKDGKIDALYLVYNGYKNMITQELHVSKIFPVDATLYECDEPEKSMLEVEAQDEEKMLDSLVNRYAQYAMYYSLIDSVAAEHSARMQAMDTATNNAKEMVKSLNVQFNKARQAAITTELIEIISGVESMK</sequence>
<reference key="1">
    <citation type="journal article" date="2008" name="Appl. Environ. Microbiol.">
        <title>Genome of the epsilonproteobacterial chemolithoautotroph Sulfurimonas denitrificans.</title>
        <authorList>
            <person name="Sievert S.M."/>
            <person name="Scott K.M."/>
            <person name="Klotz M.G."/>
            <person name="Chain P.S.G."/>
            <person name="Hauser L.J."/>
            <person name="Hemp J."/>
            <person name="Huegler M."/>
            <person name="Land M."/>
            <person name="Lapidus A."/>
            <person name="Larimer F.W."/>
            <person name="Lucas S."/>
            <person name="Malfatti S.A."/>
            <person name="Meyer F."/>
            <person name="Paulsen I.T."/>
            <person name="Ren Q."/>
            <person name="Simon J."/>
            <person name="Bailey K."/>
            <person name="Diaz E."/>
            <person name="Fitzpatrick K.A."/>
            <person name="Glover B."/>
            <person name="Gwatney N."/>
            <person name="Korajkic A."/>
            <person name="Long A."/>
            <person name="Mobberley J.M."/>
            <person name="Pantry S.N."/>
            <person name="Pazder G."/>
            <person name="Peterson S."/>
            <person name="Quintanilla J.D."/>
            <person name="Sprinkle R."/>
            <person name="Stephens J."/>
            <person name="Thomas P."/>
            <person name="Vaughn R."/>
            <person name="Weber M.J."/>
            <person name="Wooten L.L."/>
        </authorList>
    </citation>
    <scope>NUCLEOTIDE SEQUENCE [LARGE SCALE GENOMIC DNA]</scope>
    <source>
        <strain>ATCC 33889 / DSM 1251</strain>
    </source>
</reference>
<keyword id="KW-0066">ATP synthesis</keyword>
<keyword id="KW-0997">Cell inner membrane</keyword>
<keyword id="KW-1003">Cell membrane</keyword>
<keyword id="KW-0139">CF(1)</keyword>
<keyword id="KW-0375">Hydrogen ion transport</keyword>
<keyword id="KW-0406">Ion transport</keyword>
<keyword id="KW-0472">Membrane</keyword>
<keyword id="KW-1185">Reference proteome</keyword>
<keyword id="KW-0813">Transport</keyword>
<name>ATPG_SULDN</name>
<dbReference type="EMBL" id="CP000153">
    <property type="protein sequence ID" value="ABB44681.1"/>
    <property type="molecule type" value="Genomic_DNA"/>
</dbReference>
<dbReference type="RefSeq" id="WP_011373033.1">
    <property type="nucleotide sequence ID" value="NC_007575.1"/>
</dbReference>
<dbReference type="SMR" id="Q30QQ0"/>
<dbReference type="STRING" id="326298.Suden_1404"/>
<dbReference type="KEGG" id="tdn:Suden_1404"/>
<dbReference type="eggNOG" id="COG0224">
    <property type="taxonomic scope" value="Bacteria"/>
</dbReference>
<dbReference type="HOGENOM" id="CLU_050669_0_1_7"/>
<dbReference type="OrthoDB" id="9812769at2"/>
<dbReference type="Proteomes" id="UP000002714">
    <property type="component" value="Chromosome"/>
</dbReference>
<dbReference type="GO" id="GO:0005886">
    <property type="term" value="C:plasma membrane"/>
    <property type="evidence" value="ECO:0007669"/>
    <property type="project" value="UniProtKB-SubCell"/>
</dbReference>
<dbReference type="GO" id="GO:0045259">
    <property type="term" value="C:proton-transporting ATP synthase complex"/>
    <property type="evidence" value="ECO:0007669"/>
    <property type="project" value="UniProtKB-KW"/>
</dbReference>
<dbReference type="GO" id="GO:0005524">
    <property type="term" value="F:ATP binding"/>
    <property type="evidence" value="ECO:0007669"/>
    <property type="project" value="UniProtKB-UniRule"/>
</dbReference>
<dbReference type="GO" id="GO:0046933">
    <property type="term" value="F:proton-transporting ATP synthase activity, rotational mechanism"/>
    <property type="evidence" value="ECO:0007669"/>
    <property type="project" value="UniProtKB-UniRule"/>
</dbReference>
<dbReference type="GO" id="GO:0042777">
    <property type="term" value="P:proton motive force-driven plasma membrane ATP synthesis"/>
    <property type="evidence" value="ECO:0007669"/>
    <property type="project" value="UniProtKB-UniRule"/>
</dbReference>
<dbReference type="CDD" id="cd12151">
    <property type="entry name" value="F1-ATPase_gamma"/>
    <property type="match status" value="1"/>
</dbReference>
<dbReference type="FunFam" id="3.40.1380.10:FF:000006">
    <property type="entry name" value="ATP synthase gamma chain"/>
    <property type="match status" value="1"/>
</dbReference>
<dbReference type="Gene3D" id="3.40.1380.10">
    <property type="match status" value="1"/>
</dbReference>
<dbReference type="Gene3D" id="1.10.287.80">
    <property type="entry name" value="ATP synthase, gamma subunit, helix hairpin domain"/>
    <property type="match status" value="2"/>
</dbReference>
<dbReference type="HAMAP" id="MF_00815">
    <property type="entry name" value="ATP_synth_gamma_bact"/>
    <property type="match status" value="1"/>
</dbReference>
<dbReference type="InterPro" id="IPR035968">
    <property type="entry name" value="ATP_synth_F1_ATPase_gsu"/>
</dbReference>
<dbReference type="InterPro" id="IPR000131">
    <property type="entry name" value="ATP_synth_F1_gsu"/>
</dbReference>
<dbReference type="NCBIfam" id="TIGR01146">
    <property type="entry name" value="ATPsyn_F1gamma"/>
    <property type="match status" value="1"/>
</dbReference>
<dbReference type="PANTHER" id="PTHR11693">
    <property type="entry name" value="ATP SYNTHASE GAMMA CHAIN"/>
    <property type="match status" value="1"/>
</dbReference>
<dbReference type="PANTHER" id="PTHR11693:SF22">
    <property type="entry name" value="ATP SYNTHASE SUBUNIT GAMMA, MITOCHONDRIAL"/>
    <property type="match status" value="1"/>
</dbReference>
<dbReference type="Pfam" id="PF00231">
    <property type="entry name" value="ATP-synt"/>
    <property type="match status" value="1"/>
</dbReference>
<dbReference type="PRINTS" id="PR00126">
    <property type="entry name" value="ATPASEGAMMA"/>
</dbReference>
<dbReference type="SUPFAM" id="SSF52943">
    <property type="entry name" value="ATP synthase (F1-ATPase), gamma subunit"/>
    <property type="match status" value="1"/>
</dbReference>
<comment type="function">
    <text evidence="1">Produces ATP from ADP in the presence of a proton gradient across the membrane. The gamma chain is believed to be important in regulating ATPase activity and the flow of protons through the CF(0) complex.</text>
</comment>
<comment type="subunit">
    <text evidence="1">F-type ATPases have 2 components, CF(1) - the catalytic core - and CF(0) - the membrane proton channel. CF(1) has five subunits: alpha(3), beta(3), gamma(1), delta(1), epsilon(1). CF(0) has three main subunits: a, b and c.</text>
</comment>
<comment type="subcellular location">
    <subcellularLocation>
        <location evidence="1">Cell inner membrane</location>
        <topology evidence="1">Peripheral membrane protein</topology>
    </subcellularLocation>
</comment>
<comment type="similarity">
    <text evidence="1">Belongs to the ATPase gamma chain family.</text>
</comment>